<dbReference type="EC" id="3.6.1.23" evidence="1"/>
<dbReference type="EMBL" id="CP000109">
    <property type="protein sequence ID" value="ABB42496.1"/>
    <property type="molecule type" value="Genomic_DNA"/>
</dbReference>
<dbReference type="SMR" id="Q31EC7"/>
<dbReference type="STRING" id="317025.Tcr_1906"/>
<dbReference type="KEGG" id="tcx:Tcr_1906"/>
<dbReference type="eggNOG" id="COG0756">
    <property type="taxonomic scope" value="Bacteria"/>
</dbReference>
<dbReference type="HOGENOM" id="CLU_068508_1_1_6"/>
<dbReference type="OrthoDB" id="9809956at2"/>
<dbReference type="UniPathway" id="UPA00610">
    <property type="reaction ID" value="UER00666"/>
</dbReference>
<dbReference type="GO" id="GO:0004170">
    <property type="term" value="F:dUTP diphosphatase activity"/>
    <property type="evidence" value="ECO:0007669"/>
    <property type="project" value="UniProtKB-UniRule"/>
</dbReference>
<dbReference type="GO" id="GO:0000287">
    <property type="term" value="F:magnesium ion binding"/>
    <property type="evidence" value="ECO:0007669"/>
    <property type="project" value="UniProtKB-UniRule"/>
</dbReference>
<dbReference type="GO" id="GO:0006226">
    <property type="term" value="P:dUMP biosynthetic process"/>
    <property type="evidence" value="ECO:0007669"/>
    <property type="project" value="UniProtKB-UniRule"/>
</dbReference>
<dbReference type="GO" id="GO:0046081">
    <property type="term" value="P:dUTP catabolic process"/>
    <property type="evidence" value="ECO:0007669"/>
    <property type="project" value="InterPro"/>
</dbReference>
<dbReference type="CDD" id="cd07557">
    <property type="entry name" value="trimeric_dUTPase"/>
    <property type="match status" value="1"/>
</dbReference>
<dbReference type="FunFam" id="2.70.40.10:FF:000002">
    <property type="entry name" value="dUTP diphosphatase"/>
    <property type="match status" value="1"/>
</dbReference>
<dbReference type="Gene3D" id="2.70.40.10">
    <property type="match status" value="1"/>
</dbReference>
<dbReference type="HAMAP" id="MF_00116">
    <property type="entry name" value="dUTPase_bact"/>
    <property type="match status" value="1"/>
</dbReference>
<dbReference type="InterPro" id="IPR008181">
    <property type="entry name" value="dUTPase"/>
</dbReference>
<dbReference type="InterPro" id="IPR029054">
    <property type="entry name" value="dUTPase-like"/>
</dbReference>
<dbReference type="InterPro" id="IPR036157">
    <property type="entry name" value="dUTPase-like_sf"/>
</dbReference>
<dbReference type="InterPro" id="IPR033704">
    <property type="entry name" value="dUTPase_trimeric"/>
</dbReference>
<dbReference type="NCBIfam" id="TIGR00576">
    <property type="entry name" value="dut"/>
    <property type="match status" value="1"/>
</dbReference>
<dbReference type="NCBIfam" id="NF001862">
    <property type="entry name" value="PRK00601.1"/>
    <property type="match status" value="1"/>
</dbReference>
<dbReference type="PANTHER" id="PTHR11241">
    <property type="entry name" value="DEOXYURIDINE 5'-TRIPHOSPHATE NUCLEOTIDOHYDROLASE"/>
    <property type="match status" value="1"/>
</dbReference>
<dbReference type="PANTHER" id="PTHR11241:SF0">
    <property type="entry name" value="DEOXYURIDINE 5'-TRIPHOSPHATE NUCLEOTIDOHYDROLASE"/>
    <property type="match status" value="1"/>
</dbReference>
<dbReference type="Pfam" id="PF00692">
    <property type="entry name" value="dUTPase"/>
    <property type="match status" value="1"/>
</dbReference>
<dbReference type="SUPFAM" id="SSF51283">
    <property type="entry name" value="dUTPase-like"/>
    <property type="match status" value="1"/>
</dbReference>
<protein>
    <recommendedName>
        <fullName evidence="1">Deoxyuridine 5'-triphosphate nucleotidohydrolase</fullName>
        <shortName evidence="1">dUTPase</shortName>
        <ecNumber evidence="1">3.6.1.23</ecNumber>
    </recommendedName>
    <alternativeName>
        <fullName evidence="1">dUTP pyrophosphatase</fullName>
    </alternativeName>
</protein>
<reference key="1">
    <citation type="journal article" date="2006" name="PLoS Biol.">
        <title>The genome of deep-sea vent chemolithoautotroph Thiomicrospira crunogena XCL-2.</title>
        <authorList>
            <person name="Scott K.M."/>
            <person name="Sievert S.M."/>
            <person name="Abril F.N."/>
            <person name="Ball L.A."/>
            <person name="Barrett C.J."/>
            <person name="Blake R.A."/>
            <person name="Boller A.J."/>
            <person name="Chain P.S.G."/>
            <person name="Clark J.A."/>
            <person name="Davis C.R."/>
            <person name="Detter C."/>
            <person name="Do K.F."/>
            <person name="Dobrinski K.P."/>
            <person name="Faza B.I."/>
            <person name="Fitzpatrick K.A."/>
            <person name="Freyermuth S.K."/>
            <person name="Harmer T.L."/>
            <person name="Hauser L.J."/>
            <person name="Huegler M."/>
            <person name="Kerfeld C.A."/>
            <person name="Klotz M.G."/>
            <person name="Kong W.W."/>
            <person name="Land M."/>
            <person name="Lapidus A."/>
            <person name="Larimer F.W."/>
            <person name="Longo D.L."/>
            <person name="Lucas S."/>
            <person name="Malfatti S.A."/>
            <person name="Massey S.E."/>
            <person name="Martin D.D."/>
            <person name="McCuddin Z."/>
            <person name="Meyer F."/>
            <person name="Moore J.L."/>
            <person name="Ocampo L.H. Jr."/>
            <person name="Paul J.H."/>
            <person name="Paulsen I.T."/>
            <person name="Reep D.K."/>
            <person name="Ren Q."/>
            <person name="Ross R.L."/>
            <person name="Sato P.Y."/>
            <person name="Thomas P."/>
            <person name="Tinkham L.E."/>
            <person name="Zeruth G.T."/>
        </authorList>
    </citation>
    <scope>NUCLEOTIDE SEQUENCE [LARGE SCALE GENOMIC DNA]</scope>
    <source>
        <strain>DSM 25203 / XCL-2</strain>
    </source>
</reference>
<proteinExistence type="inferred from homology"/>
<keyword id="KW-0378">Hydrolase</keyword>
<keyword id="KW-0460">Magnesium</keyword>
<keyword id="KW-0479">Metal-binding</keyword>
<keyword id="KW-0546">Nucleotide metabolism</keyword>
<name>DUT_HYDCU</name>
<sequence length="153" mass="16568">MTMQVQYKILDPRLGKEIEMPHYGTKGSAGLDLRACIENDMIIEPGQTVLIPTGMAIHLDDPGLAAMLLPRSGLGHKHGIVLGNLVGLIDSDYQGPLMVSCWNRSEEAYNVTVGERIAQMVIVPVLQPVFTQVEEFGDATERGEGGFGHTGSH</sequence>
<gene>
    <name evidence="1" type="primary">dut</name>
    <name type="ordered locus">Tcr_1906</name>
</gene>
<accession>Q31EC7</accession>
<organism>
    <name type="scientific">Hydrogenovibrio crunogenus (strain DSM 25203 / XCL-2)</name>
    <name type="common">Thiomicrospira crunogena</name>
    <dbReference type="NCBI Taxonomy" id="317025"/>
    <lineage>
        <taxon>Bacteria</taxon>
        <taxon>Pseudomonadati</taxon>
        <taxon>Pseudomonadota</taxon>
        <taxon>Gammaproteobacteria</taxon>
        <taxon>Thiotrichales</taxon>
        <taxon>Piscirickettsiaceae</taxon>
        <taxon>Hydrogenovibrio</taxon>
    </lineage>
</organism>
<feature type="chain" id="PRO_0000231434" description="Deoxyuridine 5'-triphosphate nucleotidohydrolase">
    <location>
        <begin position="1"/>
        <end position="153"/>
    </location>
</feature>
<feature type="binding site" evidence="1">
    <location>
        <begin position="71"/>
        <end position="73"/>
    </location>
    <ligand>
        <name>substrate</name>
    </ligand>
</feature>
<feature type="binding site" evidence="1">
    <location>
        <position position="84"/>
    </location>
    <ligand>
        <name>substrate</name>
    </ligand>
</feature>
<feature type="binding site" evidence="1">
    <location>
        <begin position="88"/>
        <end position="90"/>
    </location>
    <ligand>
        <name>substrate</name>
    </ligand>
</feature>
<feature type="binding site" evidence="1">
    <location>
        <position position="98"/>
    </location>
    <ligand>
        <name>substrate</name>
    </ligand>
</feature>
<comment type="function">
    <text evidence="1">This enzyme is involved in nucleotide metabolism: it produces dUMP, the immediate precursor of thymidine nucleotides and it decreases the intracellular concentration of dUTP so that uracil cannot be incorporated into DNA.</text>
</comment>
<comment type="catalytic activity">
    <reaction evidence="1">
        <text>dUTP + H2O = dUMP + diphosphate + H(+)</text>
        <dbReference type="Rhea" id="RHEA:10248"/>
        <dbReference type="ChEBI" id="CHEBI:15377"/>
        <dbReference type="ChEBI" id="CHEBI:15378"/>
        <dbReference type="ChEBI" id="CHEBI:33019"/>
        <dbReference type="ChEBI" id="CHEBI:61555"/>
        <dbReference type="ChEBI" id="CHEBI:246422"/>
        <dbReference type="EC" id="3.6.1.23"/>
    </reaction>
</comment>
<comment type="cofactor">
    <cofactor evidence="1">
        <name>Mg(2+)</name>
        <dbReference type="ChEBI" id="CHEBI:18420"/>
    </cofactor>
</comment>
<comment type="pathway">
    <text evidence="1">Pyrimidine metabolism; dUMP biosynthesis; dUMP from dCTP (dUTP route): step 2/2.</text>
</comment>
<comment type="similarity">
    <text evidence="1">Belongs to the dUTPase family.</text>
</comment>
<evidence type="ECO:0000255" key="1">
    <source>
        <dbReference type="HAMAP-Rule" id="MF_00116"/>
    </source>
</evidence>